<dbReference type="EC" id="3.1.3.71" evidence="1"/>
<dbReference type="EMBL" id="AP009552">
    <property type="protein sequence ID" value="BAG01422.1"/>
    <property type="molecule type" value="Genomic_DNA"/>
</dbReference>
<dbReference type="RefSeq" id="WP_002751646.1">
    <property type="nucleotide sequence ID" value="NC_010296.1"/>
</dbReference>
<dbReference type="SMR" id="B0JV88"/>
<dbReference type="STRING" id="449447.MAE_16000"/>
<dbReference type="PaxDb" id="449447-MAE_16000"/>
<dbReference type="EnsemblBacteria" id="BAG01422">
    <property type="protein sequence ID" value="BAG01422"/>
    <property type="gene ID" value="MAE_16000"/>
</dbReference>
<dbReference type="KEGG" id="mar:MAE_16000"/>
<dbReference type="eggNOG" id="COG2045">
    <property type="taxonomic scope" value="Bacteria"/>
</dbReference>
<dbReference type="HOGENOM" id="CLU_070028_0_1_3"/>
<dbReference type="BioCyc" id="MAER449447:MAE_RS07040-MONOMER"/>
<dbReference type="Proteomes" id="UP000001510">
    <property type="component" value="Chromosome"/>
</dbReference>
<dbReference type="GO" id="GO:0050532">
    <property type="term" value="F:2-phosphosulfolactate phosphatase activity"/>
    <property type="evidence" value="ECO:0007669"/>
    <property type="project" value="UniProtKB-UniRule"/>
</dbReference>
<dbReference type="GO" id="GO:0000287">
    <property type="term" value="F:magnesium ion binding"/>
    <property type="evidence" value="ECO:0007669"/>
    <property type="project" value="UniProtKB-UniRule"/>
</dbReference>
<dbReference type="GO" id="GO:0050545">
    <property type="term" value="F:sulfopyruvate decarboxylase activity"/>
    <property type="evidence" value="ECO:0007669"/>
    <property type="project" value="TreeGrafter"/>
</dbReference>
<dbReference type="FunFam" id="3.90.1560.10:FF:000001">
    <property type="entry name" value="Probable 2-phosphosulfolactate phosphatase"/>
    <property type="match status" value="1"/>
</dbReference>
<dbReference type="Gene3D" id="3.90.1560.10">
    <property type="entry name" value="ComB-like"/>
    <property type="match status" value="1"/>
</dbReference>
<dbReference type="HAMAP" id="MF_00490">
    <property type="entry name" value="ComB"/>
    <property type="match status" value="1"/>
</dbReference>
<dbReference type="InterPro" id="IPR005238">
    <property type="entry name" value="ComB-like"/>
</dbReference>
<dbReference type="InterPro" id="IPR036702">
    <property type="entry name" value="ComB-like_sf"/>
</dbReference>
<dbReference type="NCBIfam" id="NF002056">
    <property type="entry name" value="PRK00886.1-5"/>
    <property type="match status" value="1"/>
</dbReference>
<dbReference type="PANTHER" id="PTHR37311">
    <property type="entry name" value="2-PHOSPHOSULFOLACTATE PHOSPHATASE-RELATED"/>
    <property type="match status" value="1"/>
</dbReference>
<dbReference type="PANTHER" id="PTHR37311:SF1">
    <property type="entry name" value="2-PHOSPHOSULFOLACTATE PHOSPHATASE-RELATED"/>
    <property type="match status" value="1"/>
</dbReference>
<dbReference type="Pfam" id="PF04029">
    <property type="entry name" value="2-ph_phosp"/>
    <property type="match status" value="1"/>
</dbReference>
<dbReference type="SUPFAM" id="SSF142823">
    <property type="entry name" value="ComB-like"/>
    <property type="match status" value="1"/>
</dbReference>
<accession>B0JV88</accession>
<organism>
    <name type="scientific">Microcystis aeruginosa (strain NIES-843 / IAM M-2473)</name>
    <dbReference type="NCBI Taxonomy" id="449447"/>
    <lineage>
        <taxon>Bacteria</taxon>
        <taxon>Bacillati</taxon>
        <taxon>Cyanobacteriota</taxon>
        <taxon>Cyanophyceae</taxon>
        <taxon>Oscillatoriophycideae</taxon>
        <taxon>Chroococcales</taxon>
        <taxon>Microcystaceae</taxon>
        <taxon>Microcystis</taxon>
    </lineage>
</organism>
<protein>
    <recommendedName>
        <fullName evidence="1">Probable 2-phosphosulfolactate phosphatase</fullName>
        <ecNumber evidence="1">3.1.3.71</ecNumber>
    </recommendedName>
</protein>
<reference key="1">
    <citation type="journal article" date="2007" name="DNA Res.">
        <title>Complete genomic structure of the bloom-forming toxic cyanobacterium Microcystis aeruginosa NIES-843.</title>
        <authorList>
            <person name="Kaneko T."/>
            <person name="Nakajima N."/>
            <person name="Okamoto S."/>
            <person name="Suzuki I."/>
            <person name="Tanabe Y."/>
            <person name="Tamaoki M."/>
            <person name="Nakamura Y."/>
            <person name="Kasai F."/>
            <person name="Watanabe A."/>
            <person name="Kawashima K."/>
            <person name="Kishida Y."/>
            <person name="Ono A."/>
            <person name="Shimizu Y."/>
            <person name="Takahashi C."/>
            <person name="Minami C."/>
            <person name="Fujishiro T."/>
            <person name="Kohara M."/>
            <person name="Katoh M."/>
            <person name="Nakazaki N."/>
            <person name="Nakayama S."/>
            <person name="Yamada M."/>
            <person name="Tabata S."/>
            <person name="Watanabe M.M."/>
        </authorList>
    </citation>
    <scope>NUCLEOTIDE SEQUENCE [LARGE SCALE GENOMIC DNA]</scope>
    <source>
        <strain>NIES-843 / IAM M-247</strain>
    </source>
</reference>
<gene>
    <name evidence="1" type="primary">comB</name>
    <name type="ordered locus">MAE_16000</name>
</gene>
<proteinExistence type="inferred from homology"/>
<comment type="catalytic activity">
    <reaction evidence="1">
        <text>(2R)-O-phospho-3-sulfolactate + H2O = (2R)-3-sulfolactate + phosphate</text>
        <dbReference type="Rhea" id="RHEA:23416"/>
        <dbReference type="ChEBI" id="CHEBI:15377"/>
        <dbReference type="ChEBI" id="CHEBI:15597"/>
        <dbReference type="ChEBI" id="CHEBI:43474"/>
        <dbReference type="ChEBI" id="CHEBI:58738"/>
        <dbReference type="EC" id="3.1.3.71"/>
    </reaction>
</comment>
<comment type="cofactor">
    <cofactor evidence="1">
        <name>Mg(2+)</name>
        <dbReference type="ChEBI" id="CHEBI:18420"/>
    </cofactor>
</comment>
<comment type="similarity">
    <text evidence="1">Belongs to the ComB family.</text>
</comment>
<sequence length="241" mass="26382">MQVFIYHTPELTPVHTLPDCAVVIDVLRATTTIATALNAGAEAVQTFSDLKTLMQVSDTWQPEKRLRAGERGGAKVEGCDLGNSPLDCTPDLMKGRRLFISTTNGTRALQRVEESPIVITAAMINRQAAVNYLLDKQPDTVWIVGSGWEGGYSLEDTACAGAIADALQEQSGQMAIGNDEVIASIALYRQWQNDLLGMFHSCSHGQRLLRLHCQEDLKYCANIDSLDVLPIQKEPSILVKL</sequence>
<keyword id="KW-0378">Hydrolase</keyword>
<keyword id="KW-0460">Magnesium</keyword>
<evidence type="ECO:0000255" key="1">
    <source>
        <dbReference type="HAMAP-Rule" id="MF_00490"/>
    </source>
</evidence>
<name>COMB_MICAN</name>
<feature type="chain" id="PRO_1000126228" description="Probable 2-phosphosulfolactate phosphatase">
    <location>
        <begin position="1"/>
        <end position="241"/>
    </location>
</feature>